<comment type="function">
    <text evidence="1">Catalyzes the condensation of ATP and 5-phosphoribose 1-diphosphate to form N'-(5'-phosphoribosyl)-ATP (PR-ATP). Has a crucial role in the pathway because the rate of histidine biosynthesis seems to be controlled primarily by regulation of HisG enzymatic activity.</text>
</comment>
<comment type="catalytic activity">
    <reaction evidence="1">
        <text>1-(5-phospho-beta-D-ribosyl)-ATP + diphosphate = 5-phospho-alpha-D-ribose 1-diphosphate + ATP</text>
        <dbReference type="Rhea" id="RHEA:18473"/>
        <dbReference type="ChEBI" id="CHEBI:30616"/>
        <dbReference type="ChEBI" id="CHEBI:33019"/>
        <dbReference type="ChEBI" id="CHEBI:58017"/>
        <dbReference type="ChEBI" id="CHEBI:73183"/>
        <dbReference type="EC" id="2.4.2.17"/>
    </reaction>
</comment>
<comment type="pathway">
    <text evidence="1">Amino-acid biosynthesis; L-histidine biosynthesis; L-histidine from 5-phospho-alpha-D-ribose 1-diphosphate: step 1/9.</text>
</comment>
<comment type="subunit">
    <text evidence="1">Heteromultimer composed of HisG and HisZ subunits.</text>
</comment>
<comment type="subcellular location">
    <subcellularLocation>
        <location evidence="1">Cytoplasm</location>
    </subcellularLocation>
</comment>
<comment type="domain">
    <text>Lacks the C-terminal regulatory region which is replaced by HisZ.</text>
</comment>
<comment type="similarity">
    <text evidence="1">Belongs to the ATP phosphoribosyltransferase family. Short subfamily.</text>
</comment>
<keyword id="KW-0028">Amino-acid biosynthesis</keyword>
<keyword id="KW-0067">ATP-binding</keyword>
<keyword id="KW-0963">Cytoplasm</keyword>
<keyword id="KW-0328">Glycosyltransferase</keyword>
<keyword id="KW-0368">Histidine biosynthesis</keyword>
<keyword id="KW-0547">Nucleotide-binding</keyword>
<keyword id="KW-1185">Reference proteome</keyword>
<keyword id="KW-0808">Transferase</keyword>
<evidence type="ECO:0000255" key="1">
    <source>
        <dbReference type="HAMAP-Rule" id="MF_01018"/>
    </source>
</evidence>
<name>HIS1_SYNJB</name>
<reference key="1">
    <citation type="journal article" date="2007" name="ISME J.">
        <title>Population level functional diversity in a microbial community revealed by comparative genomic and metagenomic analyses.</title>
        <authorList>
            <person name="Bhaya D."/>
            <person name="Grossman A.R."/>
            <person name="Steunou A.-S."/>
            <person name="Khuri N."/>
            <person name="Cohan F.M."/>
            <person name="Hamamura N."/>
            <person name="Melendrez M.C."/>
            <person name="Bateson M.M."/>
            <person name="Ward D.M."/>
            <person name="Heidelberg J.F."/>
        </authorList>
    </citation>
    <scope>NUCLEOTIDE SEQUENCE [LARGE SCALE GENOMIC DNA]</scope>
    <source>
        <strain>JA-2-3B'a(2-13)</strain>
    </source>
</reference>
<feature type="chain" id="PRO_0000319536" description="ATP phosphoribosyltransferase">
    <location>
        <begin position="1"/>
        <end position="235"/>
    </location>
</feature>
<gene>
    <name evidence="1" type="primary">hisG</name>
    <name type="ordered locus">CYB_1550</name>
</gene>
<organism>
    <name type="scientific">Synechococcus sp. (strain JA-2-3B'a(2-13))</name>
    <name type="common">Cyanobacteria bacterium Yellowstone B-Prime</name>
    <dbReference type="NCBI Taxonomy" id="321332"/>
    <lineage>
        <taxon>Bacteria</taxon>
        <taxon>Bacillati</taxon>
        <taxon>Cyanobacteriota</taxon>
        <taxon>Cyanophyceae</taxon>
        <taxon>Synechococcales</taxon>
        <taxon>Synechococcaceae</taxon>
        <taxon>Synechococcus</taxon>
    </lineage>
</organism>
<protein>
    <recommendedName>
        <fullName evidence="1">ATP phosphoribosyltransferase</fullName>
        <shortName evidence="1">ATP-PRT</shortName>
        <shortName evidence="1">ATP-PRTase</shortName>
        <ecNumber evidence="1">2.4.2.17</ecNumber>
    </recommendedName>
</protein>
<sequence>MLDGRPDSPPITIALAKGALLPEAIQCLQQVGIDFSRFLDPGNRLLRIESPTRLNGQRYEALLVRTHDVPVYVEYGQAQLGIVGYDVLRERYAGTEARVAHLLDLQFGHCRMSVALPQDSPYHSAAQLPAHARVASKFVGCAREYFDRLDLPVELISLYGSVELAPLTGMADAIVDLVATGRTLRENGLIERDCLFESTARLIAHPISYRVNQQPIRELITQIRERWLGSLLVGG</sequence>
<accession>Q2JL97</accession>
<dbReference type="EC" id="2.4.2.17" evidence="1"/>
<dbReference type="EMBL" id="CP000240">
    <property type="protein sequence ID" value="ABD02514.1"/>
    <property type="molecule type" value="Genomic_DNA"/>
</dbReference>
<dbReference type="RefSeq" id="WP_011433162.1">
    <property type="nucleotide sequence ID" value="NC_007776.1"/>
</dbReference>
<dbReference type="SMR" id="Q2JL97"/>
<dbReference type="STRING" id="321332.CYB_1550"/>
<dbReference type="KEGG" id="cyb:CYB_1550"/>
<dbReference type="eggNOG" id="COG0040">
    <property type="taxonomic scope" value="Bacteria"/>
</dbReference>
<dbReference type="HOGENOM" id="CLU_038115_2_0_3"/>
<dbReference type="OrthoDB" id="9801867at2"/>
<dbReference type="UniPathway" id="UPA00031">
    <property type="reaction ID" value="UER00006"/>
</dbReference>
<dbReference type="Proteomes" id="UP000001938">
    <property type="component" value="Chromosome"/>
</dbReference>
<dbReference type="GO" id="GO:0005737">
    <property type="term" value="C:cytoplasm"/>
    <property type="evidence" value="ECO:0007669"/>
    <property type="project" value="UniProtKB-SubCell"/>
</dbReference>
<dbReference type="GO" id="GO:0005524">
    <property type="term" value="F:ATP binding"/>
    <property type="evidence" value="ECO:0007669"/>
    <property type="project" value="UniProtKB-KW"/>
</dbReference>
<dbReference type="GO" id="GO:0003879">
    <property type="term" value="F:ATP phosphoribosyltransferase activity"/>
    <property type="evidence" value="ECO:0007669"/>
    <property type="project" value="UniProtKB-UniRule"/>
</dbReference>
<dbReference type="GO" id="GO:0000105">
    <property type="term" value="P:L-histidine biosynthetic process"/>
    <property type="evidence" value="ECO:0007669"/>
    <property type="project" value="UniProtKB-UniRule"/>
</dbReference>
<dbReference type="CDD" id="cd13595">
    <property type="entry name" value="PBP2_HisGs"/>
    <property type="match status" value="1"/>
</dbReference>
<dbReference type="FunFam" id="3.40.190.10:FF:000008">
    <property type="entry name" value="ATP phosphoribosyltransferase"/>
    <property type="match status" value="1"/>
</dbReference>
<dbReference type="Gene3D" id="3.40.190.10">
    <property type="entry name" value="Periplasmic binding protein-like II"/>
    <property type="match status" value="2"/>
</dbReference>
<dbReference type="HAMAP" id="MF_01018">
    <property type="entry name" value="HisG_Short"/>
    <property type="match status" value="1"/>
</dbReference>
<dbReference type="InterPro" id="IPR013820">
    <property type="entry name" value="ATP_PRibTrfase_cat"/>
</dbReference>
<dbReference type="InterPro" id="IPR018198">
    <property type="entry name" value="ATP_PRibTrfase_CS"/>
</dbReference>
<dbReference type="InterPro" id="IPR001348">
    <property type="entry name" value="ATP_PRibTrfase_HisG"/>
</dbReference>
<dbReference type="InterPro" id="IPR024893">
    <property type="entry name" value="ATP_PRibTrfase_HisG_short"/>
</dbReference>
<dbReference type="NCBIfam" id="TIGR00070">
    <property type="entry name" value="hisG"/>
    <property type="match status" value="1"/>
</dbReference>
<dbReference type="PANTHER" id="PTHR21403:SF8">
    <property type="entry name" value="ATP PHOSPHORIBOSYLTRANSFERASE"/>
    <property type="match status" value="1"/>
</dbReference>
<dbReference type="PANTHER" id="PTHR21403">
    <property type="entry name" value="ATP PHOSPHORIBOSYLTRANSFERASE ATP-PRTASE"/>
    <property type="match status" value="1"/>
</dbReference>
<dbReference type="Pfam" id="PF01634">
    <property type="entry name" value="HisG"/>
    <property type="match status" value="1"/>
</dbReference>
<dbReference type="SUPFAM" id="SSF53850">
    <property type="entry name" value="Periplasmic binding protein-like II"/>
    <property type="match status" value="1"/>
</dbReference>
<dbReference type="PROSITE" id="PS01316">
    <property type="entry name" value="ATP_P_PHORIBOSYLTR"/>
    <property type="match status" value="1"/>
</dbReference>
<proteinExistence type="inferred from homology"/>